<evidence type="ECO:0000255" key="1"/>
<evidence type="ECO:0000255" key="2">
    <source>
        <dbReference type="PROSITE-ProRule" id="PRU01240"/>
    </source>
</evidence>
<evidence type="ECO:0000256" key="3">
    <source>
        <dbReference type="SAM" id="MobiDB-lite"/>
    </source>
</evidence>
<evidence type="ECO:0000305" key="4"/>
<accession>P16588</accession>
<keyword id="KW-0378">Hydrolase</keyword>
<keyword id="KW-0645">Protease</keyword>
<keyword id="KW-0720">Serine protease</keyword>
<keyword id="KW-0732">Signal</keyword>
<keyword id="KW-0865">Zymogen</keyword>
<gene>
    <name type="primary">proA</name>
</gene>
<sequence>MLKKLLSCCITSALCFHSSLAFSQPNEIADSAELQQAPDTLPATLMLAPDDIAIADRYIVVFQQPQMMASSSPEFEQFTQQSVDRMSGLYSIQVESVFDHSISGFVANLSPEQLKDLRSDPRVDYIEQDRILSLDPIVSADANQTNAIWGLDRIDQRNLPLDNNYSANFDGTGVTAYVIDTGVNNAHVEFGGRSVSGYDFVDNDADASDCNGHGTHVAGTIGGSLYGVAKNVNLVGVRVLSCSGSGSTSGVIAGVDWVAANASGPSVANMSLGGGQSVALDSAVQSAVQSGVSFMLAAGNSNADACNYSPARVATGVTVGSTTSTDARSSFSNWGSCVDVFAPGSQIKSAWYDGGYKTISGTSMATPHVAGVAALYLQENSSVSPSQVEALIVSRASTGKVTDTRGSVNKLLYSLTDADCGQDCGGPDPTPDPEGKLTSGVPVSGLSGSSGQVAYYYVDVEAGQRLTVQMYGGSGDADLYLRFGAKPTLNAWDCRPFKYGNNETCTVSATQSGRYHVMIQGYSNYSGVSIQANY</sequence>
<name>PROA_VIBAL</name>
<reference key="1">
    <citation type="journal article" date="1989" name="Gene">
        <title>Nucleotide sequence of the Vibrio alginolyticus calcium-dependent, detergent-resistant alkaline serine exoprotease A.</title>
        <authorList>
            <person name="Deane S.M."/>
            <person name="Robb F.T."/>
            <person name="Robb S.M."/>
            <person name="Woods D.R."/>
        </authorList>
    </citation>
    <scope>NUCLEOTIDE SEQUENCE [GENOMIC DNA]</scope>
</reference>
<organism>
    <name type="scientific">Vibrio alginolyticus</name>
    <dbReference type="NCBI Taxonomy" id="663"/>
    <lineage>
        <taxon>Bacteria</taxon>
        <taxon>Pseudomonadati</taxon>
        <taxon>Pseudomonadota</taxon>
        <taxon>Gammaproteobacteria</taxon>
        <taxon>Vibrionales</taxon>
        <taxon>Vibrionaceae</taxon>
        <taxon>Vibrio</taxon>
    </lineage>
</organism>
<protein>
    <recommendedName>
        <fullName>Alkaline serine exoprotease A</fullName>
        <ecNumber>3.4.21.-</ecNumber>
    </recommendedName>
</protein>
<comment type="similarity">
    <text evidence="4">Belongs to the peptidase S8 family.</text>
</comment>
<dbReference type="EC" id="3.4.21.-"/>
<dbReference type="EMBL" id="M25499">
    <property type="protein sequence ID" value="AAA27550.1"/>
    <property type="molecule type" value="Genomic_DNA"/>
</dbReference>
<dbReference type="PIR" id="JS0173">
    <property type="entry name" value="JS0173"/>
</dbReference>
<dbReference type="SMR" id="P16588"/>
<dbReference type="STRING" id="663.BAU10_17405"/>
<dbReference type="MEROPS" id="S08.050"/>
<dbReference type="eggNOG" id="COG1404">
    <property type="taxonomic scope" value="Bacteria"/>
</dbReference>
<dbReference type="GO" id="GO:0005615">
    <property type="term" value="C:extracellular space"/>
    <property type="evidence" value="ECO:0007669"/>
    <property type="project" value="TreeGrafter"/>
</dbReference>
<dbReference type="GO" id="GO:0004252">
    <property type="term" value="F:serine-type endopeptidase activity"/>
    <property type="evidence" value="ECO:0007669"/>
    <property type="project" value="InterPro"/>
</dbReference>
<dbReference type="GO" id="GO:0006508">
    <property type="term" value="P:proteolysis"/>
    <property type="evidence" value="ECO:0007669"/>
    <property type="project" value="UniProtKB-KW"/>
</dbReference>
<dbReference type="CDD" id="cd04077">
    <property type="entry name" value="Peptidases_S8_PCSK9_ProteinaseK_like"/>
    <property type="match status" value="1"/>
</dbReference>
<dbReference type="FunFam" id="2.60.120.380:FF:000013">
    <property type="entry name" value="Alkaline serine protease"/>
    <property type="match status" value="1"/>
</dbReference>
<dbReference type="FunFam" id="3.40.50.200:FF:000014">
    <property type="entry name" value="Proteinase K"/>
    <property type="match status" value="1"/>
</dbReference>
<dbReference type="Gene3D" id="2.60.120.380">
    <property type="match status" value="1"/>
</dbReference>
<dbReference type="Gene3D" id="3.30.70.80">
    <property type="entry name" value="Peptidase S8 propeptide/proteinase inhibitor I9"/>
    <property type="match status" value="1"/>
</dbReference>
<dbReference type="Gene3D" id="3.40.50.200">
    <property type="entry name" value="Peptidase S8/S53 domain"/>
    <property type="match status" value="1"/>
</dbReference>
<dbReference type="InterPro" id="IPR034193">
    <property type="entry name" value="PCSK9_ProteinaseK-like"/>
</dbReference>
<dbReference type="InterPro" id="IPR007280">
    <property type="entry name" value="Peptidase_C_arc/bac"/>
</dbReference>
<dbReference type="InterPro" id="IPR000209">
    <property type="entry name" value="Peptidase_S8/S53_dom"/>
</dbReference>
<dbReference type="InterPro" id="IPR036852">
    <property type="entry name" value="Peptidase_S8/S53_dom_sf"/>
</dbReference>
<dbReference type="InterPro" id="IPR023827">
    <property type="entry name" value="Peptidase_S8_Asp-AS"/>
</dbReference>
<dbReference type="InterPro" id="IPR022398">
    <property type="entry name" value="Peptidase_S8_His-AS"/>
</dbReference>
<dbReference type="InterPro" id="IPR023828">
    <property type="entry name" value="Peptidase_S8_Ser-AS"/>
</dbReference>
<dbReference type="InterPro" id="IPR050131">
    <property type="entry name" value="Peptidase_S8_subtilisin-like"/>
</dbReference>
<dbReference type="InterPro" id="IPR015500">
    <property type="entry name" value="Peptidase_S8_subtilisin-rel"/>
</dbReference>
<dbReference type="InterPro" id="IPR010259">
    <property type="entry name" value="S8pro/Inhibitor_I9"/>
</dbReference>
<dbReference type="InterPro" id="IPR037045">
    <property type="entry name" value="S8pro/Inhibitor_I9_sf"/>
</dbReference>
<dbReference type="PANTHER" id="PTHR43806:SF11">
    <property type="entry name" value="CEREVISIN-RELATED"/>
    <property type="match status" value="1"/>
</dbReference>
<dbReference type="PANTHER" id="PTHR43806">
    <property type="entry name" value="PEPTIDASE S8"/>
    <property type="match status" value="1"/>
</dbReference>
<dbReference type="Pfam" id="PF05922">
    <property type="entry name" value="Inhibitor_I9"/>
    <property type="match status" value="1"/>
</dbReference>
<dbReference type="Pfam" id="PF00082">
    <property type="entry name" value="Peptidase_S8"/>
    <property type="match status" value="1"/>
</dbReference>
<dbReference type="Pfam" id="PF04151">
    <property type="entry name" value="PPC"/>
    <property type="match status" value="1"/>
</dbReference>
<dbReference type="PRINTS" id="PR00723">
    <property type="entry name" value="SUBTILISIN"/>
</dbReference>
<dbReference type="SUPFAM" id="SSF89260">
    <property type="entry name" value="Collagen-binding domain"/>
    <property type="match status" value="1"/>
</dbReference>
<dbReference type="SUPFAM" id="SSF52743">
    <property type="entry name" value="Subtilisin-like"/>
    <property type="match status" value="1"/>
</dbReference>
<dbReference type="PROSITE" id="PS51892">
    <property type="entry name" value="SUBTILASE"/>
    <property type="match status" value="1"/>
</dbReference>
<dbReference type="PROSITE" id="PS00136">
    <property type="entry name" value="SUBTILASE_ASP"/>
    <property type="match status" value="1"/>
</dbReference>
<dbReference type="PROSITE" id="PS00137">
    <property type="entry name" value="SUBTILASE_HIS"/>
    <property type="match status" value="1"/>
</dbReference>
<dbReference type="PROSITE" id="PS00138">
    <property type="entry name" value="SUBTILASE_SER"/>
    <property type="match status" value="1"/>
</dbReference>
<feature type="signal peptide" evidence="1">
    <location>
        <begin position="1"/>
        <end position="21"/>
    </location>
</feature>
<feature type="propeptide" id="PRO_0000027134" evidence="1">
    <location>
        <begin position="22"/>
        <end position="141"/>
    </location>
</feature>
<feature type="chain" id="PRO_0000027135" description="Alkaline serine exoprotease A">
    <location>
        <begin position="142"/>
        <end position="534"/>
    </location>
</feature>
<feature type="domain" description="Inhibitor I9" evidence="1">
    <location>
        <begin position="57"/>
        <end position="134"/>
    </location>
</feature>
<feature type="domain" description="Peptidase S8" evidence="2">
    <location>
        <begin position="148"/>
        <end position="419"/>
    </location>
</feature>
<feature type="region of interest" description="Disordered" evidence="3">
    <location>
        <begin position="423"/>
        <end position="442"/>
    </location>
</feature>
<feature type="active site" description="Charge relay system" evidence="2">
    <location>
        <position position="180"/>
    </location>
</feature>
<feature type="active site" description="Charge relay system" evidence="2">
    <location>
        <position position="213"/>
    </location>
</feature>
<feature type="active site" description="Charge relay system" evidence="2">
    <location>
        <position position="363"/>
    </location>
</feature>
<proteinExistence type="inferred from homology"/>